<organism>
    <name type="scientific">Staphylococcus aureus (strain N315)</name>
    <dbReference type="NCBI Taxonomy" id="158879"/>
    <lineage>
        <taxon>Bacteria</taxon>
        <taxon>Bacillati</taxon>
        <taxon>Bacillota</taxon>
        <taxon>Bacilli</taxon>
        <taxon>Bacillales</taxon>
        <taxon>Staphylococcaceae</taxon>
        <taxon>Staphylococcus</taxon>
    </lineage>
</organism>
<reference key="1">
    <citation type="journal article" date="2001" name="Lancet">
        <title>Whole genome sequencing of meticillin-resistant Staphylococcus aureus.</title>
        <authorList>
            <person name="Kuroda M."/>
            <person name="Ohta T."/>
            <person name="Uchiyama I."/>
            <person name="Baba T."/>
            <person name="Yuzawa H."/>
            <person name="Kobayashi I."/>
            <person name="Cui L."/>
            <person name="Oguchi A."/>
            <person name="Aoki K."/>
            <person name="Nagai Y."/>
            <person name="Lian J.-Q."/>
            <person name="Ito T."/>
            <person name="Kanamori M."/>
            <person name="Matsumaru H."/>
            <person name="Maruyama A."/>
            <person name="Murakami H."/>
            <person name="Hosoyama A."/>
            <person name="Mizutani-Ui Y."/>
            <person name="Takahashi N.K."/>
            <person name="Sawano T."/>
            <person name="Inoue R."/>
            <person name="Kaito C."/>
            <person name="Sekimizu K."/>
            <person name="Hirakawa H."/>
            <person name="Kuhara S."/>
            <person name="Goto S."/>
            <person name="Yabuzaki J."/>
            <person name="Kanehisa M."/>
            <person name="Yamashita A."/>
            <person name="Oshima K."/>
            <person name="Furuya K."/>
            <person name="Yoshino C."/>
            <person name="Shiba T."/>
            <person name="Hattori M."/>
            <person name="Ogasawara N."/>
            <person name="Hayashi H."/>
            <person name="Hiramatsu K."/>
        </authorList>
    </citation>
    <scope>NUCLEOTIDE SEQUENCE [LARGE SCALE GENOMIC DNA]</scope>
    <source>
        <strain>N315</strain>
    </source>
</reference>
<name>PCRB_STAAN</name>
<sequence>MYDIKKWRHIFKLDPAKHISDDDLDAICMSQTDAIMIGGTDDVTEDNVIHLMSRIRRYPLPLVLEISNIESVMPGFDFYFVPTVLNSTDVAFHNGTLLEALKTYGHSIDFEEVIFEGYVVCNADSKVAKHTKANTDLTTEDLEAYAQMVNHMYRLPVMYIEYSGIYGDVSKVQAVSEHLTETQLFYGGGISSEQQATEMAAIADTIIVGDIIYKDIKKALKTVKIKESSK</sequence>
<gene>
    <name evidence="1" type="primary">pcrB</name>
    <name type="ordered locus">SA1722</name>
</gene>
<keyword id="KW-0444">Lipid biosynthesis</keyword>
<keyword id="KW-0443">Lipid metabolism</keyword>
<keyword id="KW-0460">Magnesium</keyword>
<keyword id="KW-0479">Metal-binding</keyword>
<keyword id="KW-0594">Phospholipid biosynthesis</keyword>
<keyword id="KW-1208">Phospholipid metabolism</keyword>
<keyword id="KW-0808">Transferase</keyword>
<accession>Q99SY1</accession>
<proteinExistence type="inferred from homology"/>
<dbReference type="EC" id="2.5.1.n9" evidence="1"/>
<dbReference type="EMBL" id="BA000018">
    <property type="protein sequence ID" value="BAB42992.1"/>
    <property type="molecule type" value="Genomic_DNA"/>
</dbReference>
<dbReference type="PIR" id="A89979">
    <property type="entry name" value="A89979"/>
</dbReference>
<dbReference type="RefSeq" id="WP_000272056.1">
    <property type="nucleotide sequence ID" value="NC_002745.2"/>
</dbReference>
<dbReference type="SMR" id="Q99SY1"/>
<dbReference type="EnsemblBacteria" id="BAB42992">
    <property type="protein sequence ID" value="BAB42992"/>
    <property type="gene ID" value="BAB42992"/>
</dbReference>
<dbReference type="KEGG" id="sau:SA1722"/>
<dbReference type="HOGENOM" id="CLU_095211_0_0_9"/>
<dbReference type="UniPathway" id="UPA00940"/>
<dbReference type="GO" id="GO:0120536">
    <property type="term" value="F:heptaprenylglyceryl phosphate synthase activity"/>
    <property type="evidence" value="ECO:0007669"/>
    <property type="project" value="RHEA"/>
</dbReference>
<dbReference type="GO" id="GO:0000287">
    <property type="term" value="F:magnesium ion binding"/>
    <property type="evidence" value="ECO:0007669"/>
    <property type="project" value="UniProtKB-UniRule"/>
</dbReference>
<dbReference type="GO" id="GO:0046474">
    <property type="term" value="P:glycerophospholipid biosynthetic process"/>
    <property type="evidence" value="ECO:0007669"/>
    <property type="project" value="UniProtKB-UniRule"/>
</dbReference>
<dbReference type="CDD" id="cd02812">
    <property type="entry name" value="PcrB_like"/>
    <property type="match status" value="1"/>
</dbReference>
<dbReference type="FunFam" id="3.20.20.390:FF:000001">
    <property type="entry name" value="Heptaprenylglyceryl phosphate synthase"/>
    <property type="match status" value="1"/>
</dbReference>
<dbReference type="Gene3D" id="3.20.20.390">
    <property type="entry name" value="FMN-linked oxidoreductases"/>
    <property type="match status" value="1"/>
</dbReference>
<dbReference type="HAMAP" id="MF_00112">
    <property type="entry name" value="GGGP_HepGP_synthase"/>
    <property type="match status" value="1"/>
</dbReference>
<dbReference type="InterPro" id="IPR039074">
    <property type="entry name" value="GGGP/HepGP_synthase_I"/>
</dbReference>
<dbReference type="InterPro" id="IPR038597">
    <property type="entry name" value="GGGP/HepGP_synthase_sf"/>
</dbReference>
<dbReference type="InterPro" id="IPR008205">
    <property type="entry name" value="GGGP_HepGP_synthase"/>
</dbReference>
<dbReference type="NCBIfam" id="TIGR01768">
    <property type="entry name" value="GGGP-family"/>
    <property type="match status" value="1"/>
</dbReference>
<dbReference type="NCBIfam" id="NF003197">
    <property type="entry name" value="PRK04169.1-1"/>
    <property type="match status" value="1"/>
</dbReference>
<dbReference type="NCBIfam" id="NF003199">
    <property type="entry name" value="PRK04169.1-3"/>
    <property type="match status" value="1"/>
</dbReference>
<dbReference type="NCBIfam" id="NF003200">
    <property type="entry name" value="PRK04169.1-4"/>
    <property type="match status" value="1"/>
</dbReference>
<dbReference type="PANTHER" id="PTHR40029">
    <property type="match status" value="1"/>
</dbReference>
<dbReference type="PANTHER" id="PTHR40029:SF2">
    <property type="entry name" value="HEPTAPRENYLGLYCERYL PHOSPHATE SYNTHASE"/>
    <property type="match status" value="1"/>
</dbReference>
<dbReference type="Pfam" id="PF01884">
    <property type="entry name" value="PcrB"/>
    <property type="match status" value="1"/>
</dbReference>
<dbReference type="SUPFAM" id="SSF51395">
    <property type="entry name" value="FMN-linked oxidoreductases"/>
    <property type="match status" value="1"/>
</dbReference>
<feature type="chain" id="PRO_0000138719" description="Heptaprenylglyceryl phosphate synthase">
    <location>
        <begin position="1"/>
        <end position="230"/>
    </location>
</feature>
<feature type="binding site" evidence="1">
    <location>
        <position position="12"/>
    </location>
    <ligand>
        <name>sn-glycerol 1-phosphate</name>
        <dbReference type="ChEBI" id="CHEBI:57685"/>
    </ligand>
</feature>
<feature type="binding site" evidence="1">
    <location>
        <position position="14"/>
    </location>
    <ligand>
        <name>Mg(2+)</name>
        <dbReference type="ChEBI" id="CHEBI:18420"/>
    </ligand>
</feature>
<feature type="binding site" evidence="1">
    <location>
        <position position="40"/>
    </location>
    <ligand>
        <name>Mg(2+)</name>
        <dbReference type="ChEBI" id="CHEBI:18420"/>
    </ligand>
</feature>
<feature type="binding site" evidence="1">
    <location>
        <begin position="159"/>
        <end position="164"/>
    </location>
    <ligand>
        <name>sn-glycerol 1-phosphate</name>
        <dbReference type="ChEBI" id="CHEBI:57685"/>
    </ligand>
</feature>
<feature type="binding site" evidence="1">
    <location>
        <position position="189"/>
    </location>
    <ligand>
        <name>sn-glycerol 1-phosphate</name>
        <dbReference type="ChEBI" id="CHEBI:57685"/>
    </ligand>
</feature>
<feature type="binding site" evidence="1">
    <location>
        <begin position="209"/>
        <end position="210"/>
    </location>
    <ligand>
        <name>sn-glycerol 1-phosphate</name>
        <dbReference type="ChEBI" id="CHEBI:57685"/>
    </ligand>
</feature>
<comment type="function">
    <text evidence="1">Prenyltransferase that catalyzes in vivo the transfer of the heptaprenyl moiety of heptaprenyl pyrophosphate (HepPP; 35 carbon atoms) to the C3 hydroxyl of sn-glycerol-1-phosphate (G1P), producing heptaprenylglyceryl phosphate (HepGP). This reaction is an ether-bond-formation step in the biosynthesis of archaea-type G1P-based membrane lipids found in Bacillales.</text>
</comment>
<comment type="catalytic activity">
    <reaction evidence="1">
        <text>sn-glycerol 1-phosphate + all-trans-heptaprenyl diphosphate = 3-heptaprenyl-sn-glycero-1-phosphate + diphosphate</text>
        <dbReference type="Rhea" id="RHEA:33495"/>
        <dbReference type="ChEBI" id="CHEBI:33019"/>
        <dbReference type="ChEBI" id="CHEBI:57685"/>
        <dbReference type="ChEBI" id="CHEBI:58206"/>
        <dbReference type="ChEBI" id="CHEBI:64781"/>
        <dbReference type="EC" id="2.5.1.n9"/>
    </reaction>
</comment>
<comment type="cofactor">
    <cofactor evidence="1">
        <name>Mg(2+)</name>
        <dbReference type="ChEBI" id="CHEBI:18420"/>
    </cofactor>
</comment>
<comment type="pathway">
    <text evidence="1">Membrane lipid metabolism; glycerophospholipid metabolism.</text>
</comment>
<comment type="subunit">
    <text evidence="1">Homodimer.</text>
</comment>
<comment type="similarity">
    <text evidence="1">Belongs to the GGGP/HepGP synthase family. Group I subfamily.</text>
</comment>
<protein>
    <recommendedName>
        <fullName evidence="1">Heptaprenylglyceryl phosphate synthase</fullName>
        <shortName evidence="1">HepGP synthase</shortName>
        <ecNumber evidence="1">2.5.1.n9</ecNumber>
    </recommendedName>
    <alternativeName>
        <fullName evidence="1">Glycerol-1-phosphate heptaprenyltransferase</fullName>
    </alternativeName>
</protein>
<evidence type="ECO:0000255" key="1">
    <source>
        <dbReference type="HAMAP-Rule" id="MF_00112"/>
    </source>
</evidence>